<name>TGT_STAAN</name>
<reference key="1">
    <citation type="journal article" date="2001" name="Lancet">
        <title>Whole genome sequencing of meticillin-resistant Staphylococcus aureus.</title>
        <authorList>
            <person name="Kuroda M."/>
            <person name="Ohta T."/>
            <person name="Uchiyama I."/>
            <person name="Baba T."/>
            <person name="Yuzawa H."/>
            <person name="Kobayashi I."/>
            <person name="Cui L."/>
            <person name="Oguchi A."/>
            <person name="Aoki K."/>
            <person name="Nagai Y."/>
            <person name="Lian J.-Q."/>
            <person name="Ito T."/>
            <person name="Kanamori M."/>
            <person name="Matsumaru H."/>
            <person name="Maruyama A."/>
            <person name="Murakami H."/>
            <person name="Hosoyama A."/>
            <person name="Mizutani-Ui Y."/>
            <person name="Takahashi N.K."/>
            <person name="Sawano T."/>
            <person name="Inoue R."/>
            <person name="Kaito C."/>
            <person name="Sekimizu K."/>
            <person name="Hirakawa H."/>
            <person name="Kuhara S."/>
            <person name="Goto S."/>
            <person name="Yabuzaki J."/>
            <person name="Kanehisa M."/>
            <person name="Yamashita A."/>
            <person name="Oshima K."/>
            <person name="Furuya K."/>
            <person name="Yoshino C."/>
            <person name="Shiba T."/>
            <person name="Hattori M."/>
            <person name="Ogasawara N."/>
            <person name="Hayashi H."/>
            <person name="Hiramatsu K."/>
        </authorList>
    </citation>
    <scope>NUCLEOTIDE SEQUENCE [LARGE SCALE GENOMIC DNA]</scope>
    <source>
        <strain>N315</strain>
    </source>
</reference>
<reference key="2">
    <citation type="submission" date="2007-10" db="UniProtKB">
        <title>Shotgun proteomic analysis of total and membrane protein extracts of S. aureus strain N315.</title>
        <authorList>
            <person name="Vaezzadeh A.R."/>
            <person name="Deshusses J."/>
            <person name="Lescuyer P."/>
            <person name="Hochstrasser D.F."/>
        </authorList>
    </citation>
    <scope>IDENTIFICATION BY MASS SPECTROMETRY [LARGE SCALE ANALYSIS]</scope>
    <source>
        <strain>N315</strain>
    </source>
</reference>
<dbReference type="EC" id="2.4.2.29" evidence="1"/>
<dbReference type="EMBL" id="BA000018">
    <property type="protein sequence ID" value="BAB42731.1"/>
    <property type="molecule type" value="Genomic_DNA"/>
</dbReference>
<dbReference type="PIR" id="F89946">
    <property type="entry name" value="F89946"/>
</dbReference>
<dbReference type="RefSeq" id="WP_001112045.1">
    <property type="nucleotide sequence ID" value="NC_002745.2"/>
</dbReference>
<dbReference type="SMR" id="P66905"/>
<dbReference type="EnsemblBacteria" id="BAB42731">
    <property type="protein sequence ID" value="BAB42731"/>
    <property type="gene ID" value="BAB42731"/>
</dbReference>
<dbReference type="KEGG" id="sau:SA1465"/>
<dbReference type="HOGENOM" id="CLU_022060_0_1_9"/>
<dbReference type="UniPathway" id="UPA00392"/>
<dbReference type="GO" id="GO:0005829">
    <property type="term" value="C:cytosol"/>
    <property type="evidence" value="ECO:0007669"/>
    <property type="project" value="TreeGrafter"/>
</dbReference>
<dbReference type="GO" id="GO:0046872">
    <property type="term" value="F:metal ion binding"/>
    <property type="evidence" value="ECO:0007669"/>
    <property type="project" value="UniProtKB-KW"/>
</dbReference>
<dbReference type="GO" id="GO:0008479">
    <property type="term" value="F:tRNA-guanosine(34) queuine transglycosylase activity"/>
    <property type="evidence" value="ECO:0007669"/>
    <property type="project" value="UniProtKB-UniRule"/>
</dbReference>
<dbReference type="GO" id="GO:0008616">
    <property type="term" value="P:queuosine biosynthetic process"/>
    <property type="evidence" value="ECO:0007669"/>
    <property type="project" value="UniProtKB-UniRule"/>
</dbReference>
<dbReference type="GO" id="GO:0002099">
    <property type="term" value="P:tRNA wobble guanine modification"/>
    <property type="evidence" value="ECO:0007669"/>
    <property type="project" value="TreeGrafter"/>
</dbReference>
<dbReference type="GO" id="GO:0101030">
    <property type="term" value="P:tRNA-guanine transglycosylation"/>
    <property type="evidence" value="ECO:0007669"/>
    <property type="project" value="InterPro"/>
</dbReference>
<dbReference type="FunFam" id="3.20.20.105:FF:000001">
    <property type="entry name" value="Queuine tRNA-ribosyltransferase"/>
    <property type="match status" value="1"/>
</dbReference>
<dbReference type="Gene3D" id="3.20.20.105">
    <property type="entry name" value="Queuine tRNA-ribosyltransferase-like"/>
    <property type="match status" value="1"/>
</dbReference>
<dbReference type="HAMAP" id="MF_00168">
    <property type="entry name" value="Q_tRNA_Tgt"/>
    <property type="match status" value="1"/>
</dbReference>
<dbReference type="InterPro" id="IPR050076">
    <property type="entry name" value="ArchSynthase1/Queuine_TRR"/>
</dbReference>
<dbReference type="InterPro" id="IPR004803">
    <property type="entry name" value="TGT"/>
</dbReference>
<dbReference type="InterPro" id="IPR036511">
    <property type="entry name" value="TGT-like_sf"/>
</dbReference>
<dbReference type="InterPro" id="IPR002616">
    <property type="entry name" value="tRNA_ribo_trans-like"/>
</dbReference>
<dbReference type="NCBIfam" id="TIGR00430">
    <property type="entry name" value="Q_tRNA_tgt"/>
    <property type="match status" value="1"/>
</dbReference>
<dbReference type="NCBIfam" id="TIGR00449">
    <property type="entry name" value="tgt_general"/>
    <property type="match status" value="1"/>
</dbReference>
<dbReference type="PANTHER" id="PTHR46499">
    <property type="entry name" value="QUEUINE TRNA-RIBOSYLTRANSFERASE"/>
    <property type="match status" value="1"/>
</dbReference>
<dbReference type="PANTHER" id="PTHR46499:SF1">
    <property type="entry name" value="QUEUINE TRNA-RIBOSYLTRANSFERASE"/>
    <property type="match status" value="1"/>
</dbReference>
<dbReference type="Pfam" id="PF01702">
    <property type="entry name" value="TGT"/>
    <property type="match status" value="1"/>
</dbReference>
<dbReference type="SUPFAM" id="SSF51713">
    <property type="entry name" value="tRNA-guanine transglycosylase"/>
    <property type="match status" value="1"/>
</dbReference>
<protein>
    <recommendedName>
        <fullName evidence="1">Queuine tRNA-ribosyltransferase</fullName>
        <ecNumber evidence="1">2.4.2.29</ecNumber>
    </recommendedName>
    <alternativeName>
        <fullName evidence="1">Guanine insertion enzyme</fullName>
    </alternativeName>
    <alternativeName>
        <fullName evidence="1">tRNA-guanine transglycosylase</fullName>
    </alternativeName>
</protein>
<proteinExistence type="evidence at protein level"/>
<gene>
    <name evidence="1" type="primary">tgt</name>
    <name type="ordered locus">SA1465</name>
</gene>
<feature type="chain" id="PRO_0000135524" description="Queuine tRNA-ribosyltransferase">
    <location>
        <begin position="1"/>
        <end position="379"/>
    </location>
</feature>
<feature type="region of interest" description="RNA binding" evidence="1">
    <location>
        <begin position="249"/>
        <end position="255"/>
    </location>
</feature>
<feature type="region of interest" description="RNA binding; important for wobble base 34 recognition" evidence="1">
    <location>
        <begin position="273"/>
        <end position="277"/>
    </location>
</feature>
<feature type="active site" description="Proton acceptor" evidence="1">
    <location>
        <position position="94"/>
    </location>
</feature>
<feature type="active site" description="Nucleophile" evidence="1">
    <location>
        <position position="268"/>
    </location>
</feature>
<feature type="binding site" evidence="1">
    <location>
        <begin position="94"/>
        <end position="98"/>
    </location>
    <ligand>
        <name>substrate</name>
    </ligand>
</feature>
<feature type="binding site" evidence="1">
    <location>
        <position position="148"/>
    </location>
    <ligand>
        <name>substrate</name>
    </ligand>
</feature>
<feature type="binding site" evidence="1">
    <location>
        <position position="191"/>
    </location>
    <ligand>
        <name>substrate</name>
    </ligand>
</feature>
<feature type="binding site" evidence="1">
    <location>
        <position position="218"/>
    </location>
    <ligand>
        <name>substrate</name>
    </ligand>
</feature>
<feature type="binding site" evidence="1">
    <location>
        <position position="306"/>
    </location>
    <ligand>
        <name>Zn(2+)</name>
        <dbReference type="ChEBI" id="CHEBI:29105"/>
    </ligand>
</feature>
<feature type="binding site" evidence="1">
    <location>
        <position position="308"/>
    </location>
    <ligand>
        <name>Zn(2+)</name>
        <dbReference type="ChEBI" id="CHEBI:29105"/>
    </ligand>
</feature>
<feature type="binding site" evidence="1">
    <location>
        <position position="311"/>
    </location>
    <ligand>
        <name>Zn(2+)</name>
        <dbReference type="ChEBI" id="CHEBI:29105"/>
    </ligand>
</feature>
<feature type="binding site" evidence="1">
    <location>
        <position position="337"/>
    </location>
    <ligand>
        <name>Zn(2+)</name>
        <dbReference type="ChEBI" id="CHEBI:29105"/>
    </ligand>
</feature>
<organism>
    <name type="scientific">Staphylococcus aureus (strain N315)</name>
    <dbReference type="NCBI Taxonomy" id="158879"/>
    <lineage>
        <taxon>Bacteria</taxon>
        <taxon>Bacillati</taxon>
        <taxon>Bacillota</taxon>
        <taxon>Bacilli</taxon>
        <taxon>Bacillales</taxon>
        <taxon>Staphylococcaceae</taxon>
        <taxon>Staphylococcus</taxon>
    </lineage>
</organism>
<accession>P66905</accession>
<accession>Q99TL4</accession>
<keyword id="KW-0328">Glycosyltransferase</keyword>
<keyword id="KW-0479">Metal-binding</keyword>
<keyword id="KW-0671">Queuosine biosynthesis</keyword>
<keyword id="KW-0808">Transferase</keyword>
<keyword id="KW-0819">tRNA processing</keyword>
<keyword id="KW-0862">Zinc</keyword>
<sequence>MPAVTYEHIKTCKQSGARLGIVHTPHGSFETPMFMPVGTKATVKTMSPEELRQIEAKIILGNTYHLWLQPGNDIIKHAGGLHKFMNWDGPILTDSGGFQVFSLSNLRKITEEGVEFRHHTNGSKLFLSPEKSMQIQNDLGSDIMMAFDECPPMPAEYDYVKKSIERTTRWAKRCLDAHQRPEDQALFGIIQGGEYEDLREQSAKDLVELDFPGYAIGGLSVGEPKPVMYKMVEHTEQFMPKDKPRYLMGVGSPDALIECSIRGMDMFDCVLPTRIARNGTCMTSQGRLVIKNAKFADDLRPLDENCDCYTCQNYSRAYIRHLIKAEETFGIRLTTIHNLHFLLKLMEDIRQAIREDRLLDFKEEFFEQYGLNVENPKNF</sequence>
<evidence type="ECO:0000255" key="1">
    <source>
        <dbReference type="HAMAP-Rule" id="MF_00168"/>
    </source>
</evidence>
<comment type="function">
    <text evidence="1">Catalyzes the base-exchange of a guanine (G) residue with the queuine precursor 7-aminomethyl-7-deazaguanine (PreQ1) at position 34 (anticodon wobble position) in tRNAs with GU(N) anticodons (tRNA-Asp, -Asn, -His and -Tyr). Catalysis occurs through a double-displacement mechanism. The nucleophile active site attacks the C1' of nucleotide 34 to detach the guanine base from the RNA, forming a covalent enzyme-RNA intermediate. The proton acceptor active site deprotonates the incoming PreQ1, allowing a nucleophilic attack on the C1' of the ribose to form the product. After dissociation, two additional enzymatic reactions on the tRNA convert PreQ1 to queuine (Q), resulting in the hypermodified nucleoside queuosine (7-(((4,5-cis-dihydroxy-2-cyclopenten-1-yl)amino)methyl)-7-deazaguanosine).</text>
</comment>
<comment type="catalytic activity">
    <reaction evidence="1">
        <text>7-aminomethyl-7-carbaguanine + guanosine(34) in tRNA = 7-aminomethyl-7-carbaguanosine(34) in tRNA + guanine</text>
        <dbReference type="Rhea" id="RHEA:24104"/>
        <dbReference type="Rhea" id="RHEA-COMP:10341"/>
        <dbReference type="Rhea" id="RHEA-COMP:10342"/>
        <dbReference type="ChEBI" id="CHEBI:16235"/>
        <dbReference type="ChEBI" id="CHEBI:58703"/>
        <dbReference type="ChEBI" id="CHEBI:74269"/>
        <dbReference type="ChEBI" id="CHEBI:82833"/>
        <dbReference type="EC" id="2.4.2.29"/>
    </reaction>
</comment>
<comment type="cofactor">
    <cofactor evidence="1">
        <name>Zn(2+)</name>
        <dbReference type="ChEBI" id="CHEBI:29105"/>
    </cofactor>
    <text evidence="1">Binds 1 zinc ion per subunit.</text>
</comment>
<comment type="pathway">
    <text evidence="1">tRNA modification; tRNA-queuosine biosynthesis.</text>
</comment>
<comment type="subunit">
    <text evidence="1">Homodimer. Within each dimer, one monomer is responsible for RNA recognition and catalysis, while the other monomer binds to the replacement base PreQ1.</text>
</comment>
<comment type="similarity">
    <text evidence="1">Belongs to the queuine tRNA-ribosyltransferase family.</text>
</comment>